<accession>Q5NLJ4</accession>
<feature type="chain" id="PRO_0000225439" description="Dihydroxy-acid dehydratase">
    <location>
        <begin position="1"/>
        <end position="618"/>
    </location>
</feature>
<feature type="active site" description="Proton acceptor" evidence="1">
    <location>
        <position position="518"/>
    </location>
</feature>
<feature type="binding site" evidence="1">
    <location>
        <position position="81"/>
    </location>
    <ligand>
        <name>Mg(2+)</name>
        <dbReference type="ChEBI" id="CHEBI:18420"/>
    </ligand>
</feature>
<feature type="binding site" evidence="1">
    <location>
        <position position="122"/>
    </location>
    <ligand>
        <name>[2Fe-2S] cluster</name>
        <dbReference type="ChEBI" id="CHEBI:190135"/>
    </ligand>
</feature>
<feature type="binding site" evidence="1">
    <location>
        <position position="123"/>
    </location>
    <ligand>
        <name>Mg(2+)</name>
        <dbReference type="ChEBI" id="CHEBI:18420"/>
    </ligand>
</feature>
<feature type="binding site" description="via carbamate group" evidence="1">
    <location>
        <position position="124"/>
    </location>
    <ligand>
        <name>Mg(2+)</name>
        <dbReference type="ChEBI" id="CHEBI:18420"/>
    </ligand>
</feature>
<feature type="binding site" evidence="1">
    <location>
        <position position="195"/>
    </location>
    <ligand>
        <name>[2Fe-2S] cluster</name>
        <dbReference type="ChEBI" id="CHEBI:190135"/>
    </ligand>
</feature>
<feature type="binding site" evidence="1">
    <location>
        <position position="492"/>
    </location>
    <ligand>
        <name>Mg(2+)</name>
        <dbReference type="ChEBI" id="CHEBI:18420"/>
    </ligand>
</feature>
<feature type="modified residue" description="N6-carboxylysine" evidence="1">
    <location>
        <position position="124"/>
    </location>
</feature>
<keyword id="KW-0001">2Fe-2S</keyword>
<keyword id="KW-0028">Amino-acid biosynthesis</keyword>
<keyword id="KW-0100">Branched-chain amino acid biosynthesis</keyword>
<keyword id="KW-0408">Iron</keyword>
<keyword id="KW-0411">Iron-sulfur</keyword>
<keyword id="KW-0456">Lyase</keyword>
<keyword id="KW-0460">Magnesium</keyword>
<keyword id="KW-0479">Metal-binding</keyword>
<keyword id="KW-1185">Reference proteome</keyword>
<sequence length="618" mass="65679">MPPYRSRTTTHGRNMAGARSLWRATGVKNEDFGKPIIAVANSFTQFVPGHVHLKDMGQLVAEEIEKAGGIAKEFNTIAIDDGIAMGHGGMLYSLPSRELIADSVEYMVNAHCADALVCISNCDKITPGMLMASMRLNIPTVFVSGGPMEAGKAEVKGVKRALDLIDAMVIAADDHYSDGEVEVIEQTACATCGSCSGMFTANSMNCLTEALGLSFPGNGSMLATHSDREQLFRKAGHTIVDMARSYYEQDDAAVLPRSIATLEAFENAMSLDIAMGGSTNTVLHLLAVAQEGNVPFTMADIDRLSRHVPCLCKVAPAKNDVHMEDVHRAGGVMAILGQLDRAGLINTSLRTIHSPTLGAALDAWDISRDSCSEEAQLFYRAAPGGVPTQKAFSQSSRYEALDTDREKGVIRSKNHAFSTDGGLAVLFGNLAPEGSIVKTAGVDESILKFTGKAKVYESQEAAVAGILGNDVEAGEVVIVRYEGPKGGPGMQEMLYPTSYLKSKGLGKLCALITDGRFSGGSSGLSIGHVSPEAAEGGLIALVETGDTIVIDIPERIIHLDVDDAVIADRHARMEAKGAAAWKPQNRNRPISSALKAYAALTTNAARGAVRDVNQLERR</sequence>
<reference key="1">
    <citation type="journal article" date="2005" name="Nat. Biotechnol.">
        <title>The genome sequence of the ethanologenic bacterium Zymomonas mobilis ZM4.</title>
        <authorList>
            <person name="Seo J.-S."/>
            <person name="Chong H."/>
            <person name="Park H.S."/>
            <person name="Yoon K.-O."/>
            <person name="Jung C."/>
            <person name="Kim J.J."/>
            <person name="Hong J.H."/>
            <person name="Kim H."/>
            <person name="Kim J.-H."/>
            <person name="Kil J.-I."/>
            <person name="Park C.J."/>
            <person name="Oh H.-M."/>
            <person name="Lee J.-S."/>
            <person name="Jin S.-J."/>
            <person name="Um H.-W."/>
            <person name="Lee H.-J."/>
            <person name="Oh S.-J."/>
            <person name="Kim J.Y."/>
            <person name="Kang H.L."/>
            <person name="Lee S.Y."/>
            <person name="Lee K.J."/>
            <person name="Kang H.S."/>
        </authorList>
    </citation>
    <scope>NUCLEOTIDE SEQUENCE [LARGE SCALE GENOMIC DNA]</scope>
    <source>
        <strain>ATCC 31821 / ZM4 / CP4</strain>
    </source>
</reference>
<proteinExistence type="inferred from homology"/>
<comment type="function">
    <text evidence="1">Functions in the biosynthesis of branched-chain amino acids. Catalyzes the dehydration of (2R,3R)-2,3-dihydroxy-3-methylpentanoate (2,3-dihydroxy-3-methylvalerate) into 2-oxo-3-methylpentanoate (2-oxo-3-methylvalerate) and of (2R)-2,3-dihydroxy-3-methylbutanoate (2,3-dihydroxyisovalerate) into 2-oxo-3-methylbutanoate (2-oxoisovalerate), the penultimate precursor to L-isoleucine and L-valine, respectively.</text>
</comment>
<comment type="catalytic activity">
    <reaction evidence="1">
        <text>(2R)-2,3-dihydroxy-3-methylbutanoate = 3-methyl-2-oxobutanoate + H2O</text>
        <dbReference type="Rhea" id="RHEA:24809"/>
        <dbReference type="ChEBI" id="CHEBI:11851"/>
        <dbReference type="ChEBI" id="CHEBI:15377"/>
        <dbReference type="ChEBI" id="CHEBI:49072"/>
        <dbReference type="EC" id="4.2.1.9"/>
    </reaction>
    <physiologicalReaction direction="left-to-right" evidence="1">
        <dbReference type="Rhea" id="RHEA:24810"/>
    </physiologicalReaction>
</comment>
<comment type="catalytic activity">
    <reaction evidence="1">
        <text>(2R,3R)-2,3-dihydroxy-3-methylpentanoate = (S)-3-methyl-2-oxopentanoate + H2O</text>
        <dbReference type="Rhea" id="RHEA:27694"/>
        <dbReference type="ChEBI" id="CHEBI:15377"/>
        <dbReference type="ChEBI" id="CHEBI:35146"/>
        <dbReference type="ChEBI" id="CHEBI:49258"/>
        <dbReference type="EC" id="4.2.1.9"/>
    </reaction>
    <physiologicalReaction direction="left-to-right" evidence="1">
        <dbReference type="Rhea" id="RHEA:27695"/>
    </physiologicalReaction>
</comment>
<comment type="cofactor">
    <cofactor evidence="1">
        <name>[2Fe-2S] cluster</name>
        <dbReference type="ChEBI" id="CHEBI:190135"/>
    </cofactor>
    <text evidence="1">Binds 1 [2Fe-2S] cluster per subunit. This cluster acts as a Lewis acid cofactor.</text>
</comment>
<comment type="cofactor">
    <cofactor evidence="1">
        <name>Mg(2+)</name>
        <dbReference type="ChEBI" id="CHEBI:18420"/>
    </cofactor>
</comment>
<comment type="pathway">
    <text evidence="1">Amino-acid biosynthesis; L-isoleucine biosynthesis; L-isoleucine from 2-oxobutanoate: step 3/4.</text>
</comment>
<comment type="pathway">
    <text evidence="1">Amino-acid biosynthesis; L-valine biosynthesis; L-valine from pyruvate: step 3/4.</text>
</comment>
<comment type="subunit">
    <text evidence="1">Homodimer.</text>
</comment>
<comment type="similarity">
    <text evidence="1">Belongs to the IlvD/Edd family.</text>
</comment>
<evidence type="ECO:0000255" key="1">
    <source>
        <dbReference type="HAMAP-Rule" id="MF_00012"/>
    </source>
</evidence>
<protein>
    <recommendedName>
        <fullName evidence="1">Dihydroxy-acid dehydratase</fullName>
        <shortName evidence="1">DAD</shortName>
        <ecNumber evidence="1">4.2.1.9</ecNumber>
    </recommendedName>
</protein>
<dbReference type="EC" id="4.2.1.9" evidence="1"/>
<dbReference type="EMBL" id="AE008692">
    <property type="protein sequence ID" value="AAV90416.1"/>
    <property type="molecule type" value="Genomic_DNA"/>
</dbReference>
<dbReference type="RefSeq" id="WP_011241527.1">
    <property type="nucleotide sequence ID" value="NZ_CP035711.1"/>
</dbReference>
<dbReference type="SMR" id="Q5NLJ4"/>
<dbReference type="STRING" id="264203.ZMO1792"/>
<dbReference type="KEGG" id="zmo:ZMO1792"/>
<dbReference type="eggNOG" id="COG0129">
    <property type="taxonomic scope" value="Bacteria"/>
</dbReference>
<dbReference type="HOGENOM" id="CLU_014271_4_2_5"/>
<dbReference type="UniPathway" id="UPA00047">
    <property type="reaction ID" value="UER00057"/>
</dbReference>
<dbReference type="UniPathway" id="UPA00049">
    <property type="reaction ID" value="UER00061"/>
</dbReference>
<dbReference type="Proteomes" id="UP000001173">
    <property type="component" value="Chromosome"/>
</dbReference>
<dbReference type="GO" id="GO:0005829">
    <property type="term" value="C:cytosol"/>
    <property type="evidence" value="ECO:0007669"/>
    <property type="project" value="TreeGrafter"/>
</dbReference>
<dbReference type="GO" id="GO:0051537">
    <property type="term" value="F:2 iron, 2 sulfur cluster binding"/>
    <property type="evidence" value="ECO:0007669"/>
    <property type="project" value="UniProtKB-UniRule"/>
</dbReference>
<dbReference type="GO" id="GO:0004160">
    <property type="term" value="F:dihydroxy-acid dehydratase activity"/>
    <property type="evidence" value="ECO:0007669"/>
    <property type="project" value="UniProtKB-UniRule"/>
</dbReference>
<dbReference type="GO" id="GO:0000287">
    <property type="term" value="F:magnesium ion binding"/>
    <property type="evidence" value="ECO:0007669"/>
    <property type="project" value="UniProtKB-UniRule"/>
</dbReference>
<dbReference type="GO" id="GO:0009097">
    <property type="term" value="P:isoleucine biosynthetic process"/>
    <property type="evidence" value="ECO:0007669"/>
    <property type="project" value="UniProtKB-UniRule"/>
</dbReference>
<dbReference type="GO" id="GO:0009099">
    <property type="term" value="P:L-valine biosynthetic process"/>
    <property type="evidence" value="ECO:0007669"/>
    <property type="project" value="UniProtKB-UniRule"/>
</dbReference>
<dbReference type="FunFam" id="3.50.30.80:FF:000001">
    <property type="entry name" value="Dihydroxy-acid dehydratase"/>
    <property type="match status" value="1"/>
</dbReference>
<dbReference type="Gene3D" id="3.50.30.80">
    <property type="entry name" value="IlvD/EDD C-terminal domain-like"/>
    <property type="match status" value="1"/>
</dbReference>
<dbReference type="HAMAP" id="MF_00012">
    <property type="entry name" value="IlvD"/>
    <property type="match status" value="1"/>
</dbReference>
<dbReference type="InterPro" id="IPR042096">
    <property type="entry name" value="Dihydro-acid_dehy_C"/>
</dbReference>
<dbReference type="InterPro" id="IPR004404">
    <property type="entry name" value="DihydroxyA_deHydtase"/>
</dbReference>
<dbReference type="InterPro" id="IPR020558">
    <property type="entry name" value="DiOHA_6PGluconate_deHydtase_CS"/>
</dbReference>
<dbReference type="InterPro" id="IPR056740">
    <property type="entry name" value="ILV_EDD_C"/>
</dbReference>
<dbReference type="InterPro" id="IPR000581">
    <property type="entry name" value="ILV_EDD_N"/>
</dbReference>
<dbReference type="InterPro" id="IPR037237">
    <property type="entry name" value="IlvD/EDD_N"/>
</dbReference>
<dbReference type="NCBIfam" id="TIGR00110">
    <property type="entry name" value="ilvD"/>
    <property type="match status" value="1"/>
</dbReference>
<dbReference type="NCBIfam" id="NF009103">
    <property type="entry name" value="PRK12448.1"/>
    <property type="match status" value="1"/>
</dbReference>
<dbReference type="PANTHER" id="PTHR43661">
    <property type="entry name" value="D-XYLONATE DEHYDRATASE"/>
    <property type="match status" value="1"/>
</dbReference>
<dbReference type="PANTHER" id="PTHR43661:SF3">
    <property type="entry name" value="D-XYLONATE DEHYDRATASE YAGF-RELATED"/>
    <property type="match status" value="1"/>
</dbReference>
<dbReference type="Pfam" id="PF24877">
    <property type="entry name" value="ILV_EDD_C"/>
    <property type="match status" value="1"/>
</dbReference>
<dbReference type="Pfam" id="PF00920">
    <property type="entry name" value="ILVD_EDD_N"/>
    <property type="match status" value="1"/>
</dbReference>
<dbReference type="SUPFAM" id="SSF143975">
    <property type="entry name" value="IlvD/EDD N-terminal domain-like"/>
    <property type="match status" value="1"/>
</dbReference>
<dbReference type="SUPFAM" id="SSF52016">
    <property type="entry name" value="LeuD/IlvD-like"/>
    <property type="match status" value="1"/>
</dbReference>
<dbReference type="PROSITE" id="PS00886">
    <property type="entry name" value="ILVD_EDD_1"/>
    <property type="match status" value="1"/>
</dbReference>
<dbReference type="PROSITE" id="PS00887">
    <property type="entry name" value="ILVD_EDD_2"/>
    <property type="match status" value="1"/>
</dbReference>
<organism>
    <name type="scientific">Zymomonas mobilis subsp. mobilis (strain ATCC 31821 / ZM4 / CP4)</name>
    <dbReference type="NCBI Taxonomy" id="264203"/>
    <lineage>
        <taxon>Bacteria</taxon>
        <taxon>Pseudomonadati</taxon>
        <taxon>Pseudomonadota</taxon>
        <taxon>Alphaproteobacteria</taxon>
        <taxon>Sphingomonadales</taxon>
        <taxon>Zymomonadaceae</taxon>
        <taxon>Zymomonas</taxon>
    </lineage>
</organism>
<gene>
    <name evidence="1" type="primary">ilvD</name>
    <name type="ordered locus">ZMO1792</name>
</gene>
<name>ILVD_ZYMMO</name>